<protein>
    <recommendedName>
        <fullName>Probable kinetochore protein SPC25</fullName>
    </recommendedName>
</protein>
<feature type="chain" id="PRO_0000246674" description="Probable kinetochore protein SPC25">
    <location>
        <begin position="1"/>
        <end position="231"/>
    </location>
</feature>
<feature type="coiled-coil region" evidence="3">
    <location>
        <begin position="45"/>
        <end position="130"/>
    </location>
</feature>
<dbReference type="EMBL" id="CR382137">
    <property type="protein sequence ID" value="CAG88457.2"/>
    <property type="molecule type" value="Genomic_DNA"/>
</dbReference>
<dbReference type="RefSeq" id="XP_460184.2">
    <property type="nucleotide sequence ID" value="XM_460184.2"/>
</dbReference>
<dbReference type="SMR" id="Q6BNN6"/>
<dbReference type="STRING" id="284592.Q6BNN6"/>
<dbReference type="GeneID" id="2902758"/>
<dbReference type="KEGG" id="dha:DEHA2E20262g"/>
<dbReference type="VEuPathDB" id="FungiDB:DEHA2E20262g"/>
<dbReference type="eggNOG" id="KOG4657">
    <property type="taxonomic scope" value="Eukaryota"/>
</dbReference>
<dbReference type="HOGENOM" id="CLU_085127_0_0_1"/>
<dbReference type="InParanoid" id="Q6BNN6"/>
<dbReference type="OMA" id="HEDQRMK"/>
<dbReference type="OrthoDB" id="4056921at2759"/>
<dbReference type="Proteomes" id="UP000000599">
    <property type="component" value="Chromosome E"/>
</dbReference>
<dbReference type="GO" id="GO:0031262">
    <property type="term" value="C:Ndc80 complex"/>
    <property type="evidence" value="ECO:0000250"/>
    <property type="project" value="UniProtKB"/>
</dbReference>
<dbReference type="GO" id="GO:0005634">
    <property type="term" value="C:nucleus"/>
    <property type="evidence" value="ECO:0007669"/>
    <property type="project" value="UniProtKB-SubCell"/>
</dbReference>
<dbReference type="GO" id="GO:0051301">
    <property type="term" value="P:cell division"/>
    <property type="evidence" value="ECO:0007669"/>
    <property type="project" value="UniProtKB-KW"/>
</dbReference>
<dbReference type="GO" id="GO:0007059">
    <property type="term" value="P:chromosome segregation"/>
    <property type="evidence" value="ECO:0007669"/>
    <property type="project" value="InterPro"/>
</dbReference>
<dbReference type="CDD" id="cd23784">
    <property type="entry name" value="RWD_Spc25"/>
    <property type="match status" value="1"/>
</dbReference>
<dbReference type="Gene3D" id="3.30.457.50">
    <property type="entry name" value="Chromosome segregation protein Spc25"/>
    <property type="match status" value="1"/>
</dbReference>
<dbReference type="InterPro" id="IPR045143">
    <property type="entry name" value="Spc25"/>
</dbReference>
<dbReference type="InterPro" id="IPR013255">
    <property type="entry name" value="Spc25_C"/>
</dbReference>
<dbReference type="PANTHER" id="PTHR14281:SF0">
    <property type="entry name" value="KINETOCHORE PROTEIN SPC25"/>
    <property type="match status" value="1"/>
</dbReference>
<dbReference type="PANTHER" id="PTHR14281">
    <property type="entry name" value="KINETOCHORE PROTEIN SPC25-RELATED"/>
    <property type="match status" value="1"/>
</dbReference>
<dbReference type="Pfam" id="PF08234">
    <property type="entry name" value="Spindle_Spc25"/>
    <property type="match status" value="1"/>
</dbReference>
<gene>
    <name type="primary">SPC25</name>
    <name type="ordered locus">DEHA2E20262g</name>
</gene>
<proteinExistence type="inferred from homology"/>
<reference key="1">
    <citation type="journal article" date="2004" name="Nature">
        <title>Genome evolution in yeasts.</title>
        <authorList>
            <person name="Dujon B."/>
            <person name="Sherman D."/>
            <person name="Fischer G."/>
            <person name="Durrens P."/>
            <person name="Casaregola S."/>
            <person name="Lafontaine I."/>
            <person name="de Montigny J."/>
            <person name="Marck C."/>
            <person name="Neuveglise C."/>
            <person name="Talla E."/>
            <person name="Goffard N."/>
            <person name="Frangeul L."/>
            <person name="Aigle M."/>
            <person name="Anthouard V."/>
            <person name="Babour A."/>
            <person name="Barbe V."/>
            <person name="Barnay S."/>
            <person name="Blanchin S."/>
            <person name="Beckerich J.-M."/>
            <person name="Beyne E."/>
            <person name="Bleykasten C."/>
            <person name="Boisrame A."/>
            <person name="Boyer J."/>
            <person name="Cattolico L."/>
            <person name="Confanioleri F."/>
            <person name="de Daruvar A."/>
            <person name="Despons L."/>
            <person name="Fabre E."/>
            <person name="Fairhead C."/>
            <person name="Ferry-Dumazet H."/>
            <person name="Groppi A."/>
            <person name="Hantraye F."/>
            <person name="Hennequin C."/>
            <person name="Jauniaux N."/>
            <person name="Joyet P."/>
            <person name="Kachouri R."/>
            <person name="Kerrest A."/>
            <person name="Koszul R."/>
            <person name="Lemaire M."/>
            <person name="Lesur I."/>
            <person name="Ma L."/>
            <person name="Muller H."/>
            <person name="Nicaud J.-M."/>
            <person name="Nikolski M."/>
            <person name="Oztas S."/>
            <person name="Ozier-Kalogeropoulos O."/>
            <person name="Pellenz S."/>
            <person name="Potier S."/>
            <person name="Richard G.-F."/>
            <person name="Straub M.-L."/>
            <person name="Suleau A."/>
            <person name="Swennen D."/>
            <person name="Tekaia F."/>
            <person name="Wesolowski-Louvel M."/>
            <person name="Westhof E."/>
            <person name="Wirth B."/>
            <person name="Zeniou-Meyer M."/>
            <person name="Zivanovic Y."/>
            <person name="Bolotin-Fukuhara M."/>
            <person name="Thierry A."/>
            <person name="Bouchier C."/>
            <person name="Caudron B."/>
            <person name="Scarpelli C."/>
            <person name="Gaillardin C."/>
            <person name="Weissenbach J."/>
            <person name="Wincker P."/>
            <person name="Souciet J.-L."/>
        </authorList>
    </citation>
    <scope>NUCLEOTIDE SEQUENCE [LARGE SCALE GENOMIC DNA]</scope>
    <source>
        <strain>ATCC 36239 / CBS 767 / BCRC 21394 / JCM 1990 / NBRC 0083 / IGC 2968</strain>
    </source>
</reference>
<sequence length="231" mass="26658">MSTANKSPIDEFESLQSLMNDFSAKFDTALTQKRSAIINDKQLHYVKVNELKNQETQLQSDIEGLKQKEIKVKDTIKRTMEDLQMQQLKVDELARKQDSLLDEKDELQTEIDNLSSQVQTTTDSLEKSSNNLAEQLRKDYPELLKYEQHLGLKIEVIGQDSLKFVFSNIDPNDLDKEVWCELLVGGELFKVGDSFPPLAPDIITLLENEFNHHREFVKFLKTVRALLMDLI</sequence>
<name>SPC25_DEBHA</name>
<organism>
    <name type="scientific">Debaryomyces hansenii (strain ATCC 36239 / CBS 767 / BCRC 21394 / JCM 1990 / NBRC 0083 / IGC 2968)</name>
    <name type="common">Yeast</name>
    <name type="synonym">Torulaspora hansenii</name>
    <dbReference type="NCBI Taxonomy" id="284592"/>
    <lineage>
        <taxon>Eukaryota</taxon>
        <taxon>Fungi</taxon>
        <taxon>Dikarya</taxon>
        <taxon>Ascomycota</taxon>
        <taxon>Saccharomycotina</taxon>
        <taxon>Pichiomycetes</taxon>
        <taxon>Debaryomycetaceae</taxon>
        <taxon>Debaryomyces</taxon>
    </lineage>
</organism>
<accession>Q6BNN6</accession>
<keyword id="KW-0131">Cell cycle</keyword>
<keyword id="KW-0132">Cell division</keyword>
<keyword id="KW-0137">Centromere</keyword>
<keyword id="KW-0158">Chromosome</keyword>
<keyword id="KW-0175">Coiled coil</keyword>
<keyword id="KW-0995">Kinetochore</keyword>
<keyword id="KW-0498">Mitosis</keyword>
<keyword id="KW-0539">Nucleus</keyword>
<keyword id="KW-1185">Reference proteome</keyword>
<comment type="function">
    <text evidence="1">Acts as a component of the essential kinetochore-associated NDC80 complex, which is required for chromosome segregation and spindle checkpoint activity.</text>
</comment>
<comment type="subunit">
    <text evidence="1">Component of the NDC80 complex, which consists of NDC80, NUF2, SPC24 and SPC25.</text>
</comment>
<comment type="subcellular location">
    <subcellularLocation>
        <location evidence="2">Nucleus</location>
    </subcellularLocation>
    <subcellularLocation>
        <location evidence="2">Chromosome</location>
        <location evidence="2">Centromere</location>
        <location evidence="2">Kinetochore</location>
    </subcellularLocation>
    <text evidence="2">Associated with kinetochores.</text>
</comment>
<comment type="similarity">
    <text evidence="4">Belongs to the SPC25 family.</text>
</comment>
<evidence type="ECO:0000250" key="1"/>
<evidence type="ECO:0000250" key="2">
    <source>
        <dbReference type="UniProtKB" id="P40014"/>
    </source>
</evidence>
<evidence type="ECO:0000255" key="3"/>
<evidence type="ECO:0000305" key="4"/>